<dbReference type="EC" id="1.1.1.25" evidence="1"/>
<dbReference type="EMBL" id="CP000681">
    <property type="protein sequence ID" value="ABP73768.1"/>
    <property type="molecule type" value="Genomic_DNA"/>
</dbReference>
<dbReference type="SMR" id="A4Y1D5"/>
<dbReference type="STRING" id="319224.Sputcn32_0032"/>
<dbReference type="KEGG" id="spc:Sputcn32_0032"/>
<dbReference type="eggNOG" id="COG0169">
    <property type="taxonomic scope" value="Bacteria"/>
</dbReference>
<dbReference type="HOGENOM" id="CLU_044063_2_1_6"/>
<dbReference type="UniPathway" id="UPA00053">
    <property type="reaction ID" value="UER00087"/>
</dbReference>
<dbReference type="GO" id="GO:0005829">
    <property type="term" value="C:cytosol"/>
    <property type="evidence" value="ECO:0007669"/>
    <property type="project" value="TreeGrafter"/>
</dbReference>
<dbReference type="GO" id="GO:0050661">
    <property type="term" value="F:NADP binding"/>
    <property type="evidence" value="ECO:0007669"/>
    <property type="project" value="InterPro"/>
</dbReference>
<dbReference type="GO" id="GO:0004764">
    <property type="term" value="F:shikimate 3-dehydrogenase (NADP+) activity"/>
    <property type="evidence" value="ECO:0007669"/>
    <property type="project" value="UniProtKB-UniRule"/>
</dbReference>
<dbReference type="GO" id="GO:0008652">
    <property type="term" value="P:amino acid biosynthetic process"/>
    <property type="evidence" value="ECO:0007669"/>
    <property type="project" value="UniProtKB-KW"/>
</dbReference>
<dbReference type="GO" id="GO:0009073">
    <property type="term" value="P:aromatic amino acid family biosynthetic process"/>
    <property type="evidence" value="ECO:0007669"/>
    <property type="project" value="UniProtKB-KW"/>
</dbReference>
<dbReference type="GO" id="GO:0009423">
    <property type="term" value="P:chorismate biosynthetic process"/>
    <property type="evidence" value="ECO:0007669"/>
    <property type="project" value="UniProtKB-UniRule"/>
</dbReference>
<dbReference type="GO" id="GO:0019632">
    <property type="term" value="P:shikimate metabolic process"/>
    <property type="evidence" value="ECO:0007669"/>
    <property type="project" value="InterPro"/>
</dbReference>
<dbReference type="CDD" id="cd01065">
    <property type="entry name" value="NAD_bind_Shikimate_DH"/>
    <property type="match status" value="1"/>
</dbReference>
<dbReference type="FunFam" id="3.40.50.10860:FF:000006">
    <property type="entry name" value="Shikimate dehydrogenase (NADP(+))"/>
    <property type="match status" value="1"/>
</dbReference>
<dbReference type="FunFam" id="3.40.50.720:FF:000104">
    <property type="entry name" value="Shikimate dehydrogenase (NADP(+))"/>
    <property type="match status" value="1"/>
</dbReference>
<dbReference type="Gene3D" id="3.40.50.10860">
    <property type="entry name" value="Leucine Dehydrogenase, chain A, domain 1"/>
    <property type="match status" value="1"/>
</dbReference>
<dbReference type="Gene3D" id="3.40.50.720">
    <property type="entry name" value="NAD(P)-binding Rossmann-like Domain"/>
    <property type="match status" value="1"/>
</dbReference>
<dbReference type="HAMAP" id="MF_00222">
    <property type="entry name" value="Shikimate_DH_AroE"/>
    <property type="match status" value="1"/>
</dbReference>
<dbReference type="InterPro" id="IPR046346">
    <property type="entry name" value="Aminoacid_DH-like_N_sf"/>
</dbReference>
<dbReference type="InterPro" id="IPR036291">
    <property type="entry name" value="NAD(P)-bd_dom_sf"/>
</dbReference>
<dbReference type="InterPro" id="IPR041121">
    <property type="entry name" value="SDH_C"/>
</dbReference>
<dbReference type="InterPro" id="IPR011342">
    <property type="entry name" value="Shikimate_DH"/>
</dbReference>
<dbReference type="InterPro" id="IPR013708">
    <property type="entry name" value="Shikimate_DH-bd_N"/>
</dbReference>
<dbReference type="InterPro" id="IPR022893">
    <property type="entry name" value="Shikimate_DH_fam"/>
</dbReference>
<dbReference type="InterPro" id="IPR006151">
    <property type="entry name" value="Shikm_DH/Glu-tRNA_Rdtase"/>
</dbReference>
<dbReference type="NCBIfam" id="TIGR00507">
    <property type="entry name" value="aroE"/>
    <property type="match status" value="1"/>
</dbReference>
<dbReference type="NCBIfam" id="NF001310">
    <property type="entry name" value="PRK00258.1-2"/>
    <property type="match status" value="1"/>
</dbReference>
<dbReference type="PANTHER" id="PTHR21089:SF1">
    <property type="entry name" value="BIFUNCTIONAL 3-DEHYDROQUINATE DEHYDRATASE_SHIKIMATE DEHYDROGENASE, CHLOROPLASTIC"/>
    <property type="match status" value="1"/>
</dbReference>
<dbReference type="PANTHER" id="PTHR21089">
    <property type="entry name" value="SHIKIMATE DEHYDROGENASE"/>
    <property type="match status" value="1"/>
</dbReference>
<dbReference type="Pfam" id="PF18317">
    <property type="entry name" value="SDH_C"/>
    <property type="match status" value="1"/>
</dbReference>
<dbReference type="Pfam" id="PF01488">
    <property type="entry name" value="Shikimate_DH"/>
    <property type="match status" value="1"/>
</dbReference>
<dbReference type="Pfam" id="PF08501">
    <property type="entry name" value="Shikimate_dh_N"/>
    <property type="match status" value="1"/>
</dbReference>
<dbReference type="SUPFAM" id="SSF53223">
    <property type="entry name" value="Aminoacid dehydrogenase-like, N-terminal domain"/>
    <property type="match status" value="1"/>
</dbReference>
<dbReference type="SUPFAM" id="SSF51735">
    <property type="entry name" value="NAD(P)-binding Rossmann-fold domains"/>
    <property type="match status" value="1"/>
</dbReference>
<comment type="function">
    <text evidence="1">Involved in the biosynthesis of the chorismate, which leads to the biosynthesis of aromatic amino acids. Catalyzes the reversible NADPH linked reduction of 3-dehydroshikimate (DHSA) to yield shikimate (SA).</text>
</comment>
<comment type="catalytic activity">
    <reaction evidence="1">
        <text>shikimate + NADP(+) = 3-dehydroshikimate + NADPH + H(+)</text>
        <dbReference type="Rhea" id="RHEA:17737"/>
        <dbReference type="ChEBI" id="CHEBI:15378"/>
        <dbReference type="ChEBI" id="CHEBI:16630"/>
        <dbReference type="ChEBI" id="CHEBI:36208"/>
        <dbReference type="ChEBI" id="CHEBI:57783"/>
        <dbReference type="ChEBI" id="CHEBI:58349"/>
        <dbReference type="EC" id="1.1.1.25"/>
    </reaction>
</comment>
<comment type="pathway">
    <text evidence="1">Metabolic intermediate biosynthesis; chorismate biosynthesis; chorismate from D-erythrose 4-phosphate and phosphoenolpyruvate: step 4/7.</text>
</comment>
<comment type="subunit">
    <text evidence="1">Homodimer.</text>
</comment>
<comment type="similarity">
    <text evidence="1">Belongs to the shikimate dehydrogenase family.</text>
</comment>
<name>AROE_SHEPC</name>
<gene>
    <name evidence="1" type="primary">aroE</name>
    <name type="ordered locus">Sputcn32_0032</name>
</gene>
<sequence>MTDKYAVFGNPISHSKSPFIHGQFAAPTQELLTYEAILAPVDGFEASLTAFFNAGGKGANVTVPFKEQAFALCDSLSPEAKLAGAVNTLSLLADGTIRGDNTDGLGLVADLIANLGSLQGKRVLLIGAGGAARGCILPLLNAGIAQLTISNRTHTKAQLLVDIFTSVDNGAFANRVTAVEMNELVGEFDIIINSTSASLAGELPPVPAHIITPQTVCYDMMYGASVTAFNQWALSQGAAKVIDGLGMLVGQAAKSFTLWRGVEPDTQVVLTLLRDKLKAEPK</sequence>
<protein>
    <recommendedName>
        <fullName evidence="1">Shikimate dehydrogenase (NADP(+))</fullName>
        <shortName evidence="1">SDH</shortName>
        <ecNumber evidence="1">1.1.1.25</ecNumber>
    </recommendedName>
</protein>
<organism>
    <name type="scientific">Shewanella putrefaciens (strain CN-32 / ATCC BAA-453)</name>
    <dbReference type="NCBI Taxonomy" id="319224"/>
    <lineage>
        <taxon>Bacteria</taxon>
        <taxon>Pseudomonadati</taxon>
        <taxon>Pseudomonadota</taxon>
        <taxon>Gammaproteobacteria</taxon>
        <taxon>Alteromonadales</taxon>
        <taxon>Shewanellaceae</taxon>
        <taxon>Shewanella</taxon>
    </lineage>
</organism>
<feature type="chain" id="PRO_0000325167" description="Shikimate dehydrogenase (NADP(+))">
    <location>
        <begin position="1"/>
        <end position="282"/>
    </location>
</feature>
<feature type="active site" description="Proton acceptor" evidence="1">
    <location>
        <position position="66"/>
    </location>
</feature>
<feature type="binding site" evidence="1">
    <location>
        <begin position="15"/>
        <end position="17"/>
    </location>
    <ligand>
        <name>shikimate</name>
        <dbReference type="ChEBI" id="CHEBI:36208"/>
    </ligand>
</feature>
<feature type="binding site" evidence="1">
    <location>
        <position position="62"/>
    </location>
    <ligand>
        <name>shikimate</name>
        <dbReference type="ChEBI" id="CHEBI:36208"/>
    </ligand>
</feature>
<feature type="binding site" evidence="1">
    <location>
        <position position="87"/>
    </location>
    <ligand>
        <name>shikimate</name>
        <dbReference type="ChEBI" id="CHEBI:36208"/>
    </ligand>
</feature>
<feature type="binding site" evidence="1">
    <location>
        <position position="103"/>
    </location>
    <ligand>
        <name>shikimate</name>
        <dbReference type="ChEBI" id="CHEBI:36208"/>
    </ligand>
</feature>
<feature type="binding site" evidence="1">
    <location>
        <begin position="127"/>
        <end position="131"/>
    </location>
    <ligand>
        <name>NADP(+)</name>
        <dbReference type="ChEBI" id="CHEBI:58349"/>
    </ligand>
</feature>
<feature type="binding site" evidence="1">
    <location>
        <begin position="151"/>
        <end position="156"/>
    </location>
    <ligand>
        <name>NADP(+)</name>
        <dbReference type="ChEBI" id="CHEBI:58349"/>
    </ligand>
</feature>
<feature type="binding site" evidence="1">
    <location>
        <position position="220"/>
    </location>
    <ligand>
        <name>NADP(+)</name>
        <dbReference type="ChEBI" id="CHEBI:58349"/>
    </ligand>
</feature>
<feature type="binding site" evidence="1">
    <location>
        <position position="222"/>
    </location>
    <ligand>
        <name>shikimate</name>
        <dbReference type="ChEBI" id="CHEBI:36208"/>
    </ligand>
</feature>
<feature type="binding site" evidence="1">
    <location>
        <position position="244"/>
    </location>
    <ligand>
        <name>NADP(+)</name>
        <dbReference type="ChEBI" id="CHEBI:58349"/>
    </ligand>
</feature>
<proteinExistence type="inferred from homology"/>
<keyword id="KW-0028">Amino-acid biosynthesis</keyword>
<keyword id="KW-0057">Aromatic amino acid biosynthesis</keyword>
<keyword id="KW-0521">NADP</keyword>
<keyword id="KW-0560">Oxidoreductase</keyword>
<reference key="1">
    <citation type="submission" date="2007-04" db="EMBL/GenBank/DDBJ databases">
        <title>Complete sequence of Shewanella putrefaciens CN-32.</title>
        <authorList>
            <consortium name="US DOE Joint Genome Institute"/>
            <person name="Copeland A."/>
            <person name="Lucas S."/>
            <person name="Lapidus A."/>
            <person name="Barry K."/>
            <person name="Detter J.C."/>
            <person name="Glavina del Rio T."/>
            <person name="Hammon N."/>
            <person name="Israni S."/>
            <person name="Dalin E."/>
            <person name="Tice H."/>
            <person name="Pitluck S."/>
            <person name="Chain P."/>
            <person name="Malfatti S."/>
            <person name="Shin M."/>
            <person name="Vergez L."/>
            <person name="Schmutz J."/>
            <person name="Larimer F."/>
            <person name="Land M."/>
            <person name="Hauser L."/>
            <person name="Kyrpides N."/>
            <person name="Mikhailova N."/>
            <person name="Romine M.F."/>
            <person name="Fredrickson J."/>
            <person name="Tiedje J."/>
            <person name="Richardson P."/>
        </authorList>
    </citation>
    <scope>NUCLEOTIDE SEQUENCE [LARGE SCALE GENOMIC DNA]</scope>
    <source>
        <strain>CN-32 / ATCC BAA-453</strain>
    </source>
</reference>
<accession>A4Y1D5</accession>
<evidence type="ECO:0000255" key="1">
    <source>
        <dbReference type="HAMAP-Rule" id="MF_00222"/>
    </source>
</evidence>